<feature type="chain" id="PRO_0000132117" description="Small ribosomal subunit protein uS13">
    <location>
        <begin position="1"/>
        <end position="119"/>
    </location>
</feature>
<feature type="region of interest" description="Disordered" evidence="2">
    <location>
        <begin position="94"/>
        <end position="119"/>
    </location>
</feature>
<feature type="compositionally biased region" description="Basic residues" evidence="2">
    <location>
        <begin position="94"/>
        <end position="113"/>
    </location>
</feature>
<accession>P59755</accession>
<proteinExistence type="inferred from homology"/>
<gene>
    <name evidence="1" type="primary">rpsM</name>
    <name type="ordered locus">NE0423</name>
</gene>
<protein>
    <recommendedName>
        <fullName evidence="1">Small ribosomal subunit protein uS13</fullName>
    </recommendedName>
    <alternativeName>
        <fullName evidence="3">30S ribosomal protein S13</fullName>
    </alternativeName>
</protein>
<name>RS13_NITEU</name>
<keyword id="KW-1185">Reference proteome</keyword>
<keyword id="KW-0687">Ribonucleoprotein</keyword>
<keyword id="KW-0689">Ribosomal protein</keyword>
<keyword id="KW-0694">RNA-binding</keyword>
<keyword id="KW-0699">rRNA-binding</keyword>
<keyword id="KW-0820">tRNA-binding</keyword>
<reference key="1">
    <citation type="journal article" date="2003" name="J. Bacteriol.">
        <title>Complete genome sequence of the ammonia-oxidizing bacterium and obligate chemolithoautotroph Nitrosomonas europaea.</title>
        <authorList>
            <person name="Chain P."/>
            <person name="Lamerdin J.E."/>
            <person name="Larimer F.W."/>
            <person name="Regala W."/>
            <person name="Lao V."/>
            <person name="Land M.L."/>
            <person name="Hauser L."/>
            <person name="Hooper A.B."/>
            <person name="Klotz M.G."/>
            <person name="Norton J."/>
            <person name="Sayavedra-Soto L.A."/>
            <person name="Arciero D.M."/>
            <person name="Hommes N.G."/>
            <person name="Whittaker M.M."/>
            <person name="Arp D.J."/>
        </authorList>
    </citation>
    <scope>NUCLEOTIDE SEQUENCE [LARGE SCALE GENOMIC DNA]</scope>
    <source>
        <strain>ATCC 19718 / CIP 103999 / KCTC 2705 / NBRC 14298</strain>
    </source>
</reference>
<sequence length="119" mass="13353">MARIAGVNLPSNKHVNIALTAIYGIGNTTARKICSDLQIPPFIKLKDLEDIKLDELRESVSKLIVEGDLRREISMNIKRLIDLGSYRGLRHRRGLPVRGQRTKTNARTRKGPRKAIGAK</sequence>
<comment type="function">
    <text evidence="1">Located at the top of the head of the 30S subunit, it contacts several helices of the 16S rRNA. In the 70S ribosome it contacts the 23S rRNA (bridge B1a) and protein L5 of the 50S subunit (bridge B1b), connecting the 2 subunits; these bridges are implicated in subunit movement. Contacts the tRNAs in the A and P-sites.</text>
</comment>
<comment type="subunit">
    <text evidence="1">Part of the 30S ribosomal subunit. Forms a loose heterodimer with protein S19. Forms two bridges to the 50S subunit in the 70S ribosome.</text>
</comment>
<comment type="similarity">
    <text evidence="1">Belongs to the universal ribosomal protein uS13 family.</text>
</comment>
<organism>
    <name type="scientific">Nitrosomonas europaea (strain ATCC 19718 / CIP 103999 / KCTC 2705 / NBRC 14298)</name>
    <dbReference type="NCBI Taxonomy" id="228410"/>
    <lineage>
        <taxon>Bacteria</taxon>
        <taxon>Pseudomonadati</taxon>
        <taxon>Pseudomonadota</taxon>
        <taxon>Betaproteobacteria</taxon>
        <taxon>Nitrosomonadales</taxon>
        <taxon>Nitrosomonadaceae</taxon>
        <taxon>Nitrosomonas</taxon>
    </lineage>
</organism>
<dbReference type="EMBL" id="AL954747">
    <property type="protein sequence ID" value="CAD84334.1"/>
    <property type="molecule type" value="Genomic_DNA"/>
</dbReference>
<dbReference type="RefSeq" id="WP_011111058.1">
    <property type="nucleotide sequence ID" value="NC_004757.1"/>
</dbReference>
<dbReference type="SMR" id="P59755"/>
<dbReference type="STRING" id="228410.NE0423"/>
<dbReference type="GeneID" id="87103630"/>
<dbReference type="KEGG" id="neu:NE0423"/>
<dbReference type="eggNOG" id="COG0099">
    <property type="taxonomic scope" value="Bacteria"/>
</dbReference>
<dbReference type="HOGENOM" id="CLU_103849_1_2_4"/>
<dbReference type="OrthoDB" id="9803610at2"/>
<dbReference type="PhylomeDB" id="P59755"/>
<dbReference type="Proteomes" id="UP000001416">
    <property type="component" value="Chromosome"/>
</dbReference>
<dbReference type="GO" id="GO:0005829">
    <property type="term" value="C:cytosol"/>
    <property type="evidence" value="ECO:0007669"/>
    <property type="project" value="TreeGrafter"/>
</dbReference>
<dbReference type="GO" id="GO:0015935">
    <property type="term" value="C:small ribosomal subunit"/>
    <property type="evidence" value="ECO:0007669"/>
    <property type="project" value="TreeGrafter"/>
</dbReference>
<dbReference type="GO" id="GO:0019843">
    <property type="term" value="F:rRNA binding"/>
    <property type="evidence" value="ECO:0007669"/>
    <property type="project" value="UniProtKB-UniRule"/>
</dbReference>
<dbReference type="GO" id="GO:0003735">
    <property type="term" value="F:structural constituent of ribosome"/>
    <property type="evidence" value="ECO:0007669"/>
    <property type="project" value="InterPro"/>
</dbReference>
<dbReference type="GO" id="GO:0000049">
    <property type="term" value="F:tRNA binding"/>
    <property type="evidence" value="ECO:0007669"/>
    <property type="project" value="UniProtKB-UniRule"/>
</dbReference>
<dbReference type="GO" id="GO:0006412">
    <property type="term" value="P:translation"/>
    <property type="evidence" value="ECO:0007669"/>
    <property type="project" value="UniProtKB-UniRule"/>
</dbReference>
<dbReference type="FunFam" id="1.10.8.50:FF:000001">
    <property type="entry name" value="30S ribosomal protein S13"/>
    <property type="match status" value="1"/>
</dbReference>
<dbReference type="FunFam" id="4.10.910.10:FF:000001">
    <property type="entry name" value="30S ribosomal protein S13"/>
    <property type="match status" value="1"/>
</dbReference>
<dbReference type="Gene3D" id="1.10.8.50">
    <property type="match status" value="1"/>
</dbReference>
<dbReference type="Gene3D" id="4.10.910.10">
    <property type="entry name" value="30s ribosomal protein s13, domain 2"/>
    <property type="match status" value="1"/>
</dbReference>
<dbReference type="HAMAP" id="MF_01315">
    <property type="entry name" value="Ribosomal_uS13"/>
    <property type="match status" value="1"/>
</dbReference>
<dbReference type="InterPro" id="IPR027437">
    <property type="entry name" value="Rbsml_uS13_C"/>
</dbReference>
<dbReference type="InterPro" id="IPR001892">
    <property type="entry name" value="Ribosomal_uS13"/>
</dbReference>
<dbReference type="InterPro" id="IPR010979">
    <property type="entry name" value="Ribosomal_uS13-like_H2TH"/>
</dbReference>
<dbReference type="InterPro" id="IPR019980">
    <property type="entry name" value="Ribosomal_uS13_bac-type"/>
</dbReference>
<dbReference type="InterPro" id="IPR018269">
    <property type="entry name" value="Ribosomal_uS13_CS"/>
</dbReference>
<dbReference type="NCBIfam" id="TIGR03631">
    <property type="entry name" value="uS13_bact"/>
    <property type="match status" value="1"/>
</dbReference>
<dbReference type="PANTHER" id="PTHR10871">
    <property type="entry name" value="30S RIBOSOMAL PROTEIN S13/40S RIBOSOMAL PROTEIN S18"/>
    <property type="match status" value="1"/>
</dbReference>
<dbReference type="PANTHER" id="PTHR10871:SF1">
    <property type="entry name" value="SMALL RIBOSOMAL SUBUNIT PROTEIN US13M"/>
    <property type="match status" value="1"/>
</dbReference>
<dbReference type="Pfam" id="PF00416">
    <property type="entry name" value="Ribosomal_S13"/>
    <property type="match status" value="1"/>
</dbReference>
<dbReference type="PIRSF" id="PIRSF002134">
    <property type="entry name" value="Ribosomal_S13"/>
    <property type="match status" value="1"/>
</dbReference>
<dbReference type="SUPFAM" id="SSF46946">
    <property type="entry name" value="S13-like H2TH domain"/>
    <property type="match status" value="1"/>
</dbReference>
<dbReference type="PROSITE" id="PS00646">
    <property type="entry name" value="RIBOSOMAL_S13_1"/>
    <property type="match status" value="1"/>
</dbReference>
<dbReference type="PROSITE" id="PS50159">
    <property type="entry name" value="RIBOSOMAL_S13_2"/>
    <property type="match status" value="1"/>
</dbReference>
<evidence type="ECO:0000255" key="1">
    <source>
        <dbReference type="HAMAP-Rule" id="MF_01315"/>
    </source>
</evidence>
<evidence type="ECO:0000256" key="2">
    <source>
        <dbReference type="SAM" id="MobiDB-lite"/>
    </source>
</evidence>
<evidence type="ECO:0000305" key="3"/>